<sequence length="523" mass="59365">MDKELAEKVEKRRTFAIISHPDAGKTTITEQMLLFGGVIRKAGTVKARKTGNFATSDWMEIEKKRGISVTSSVMQFEYKGKRINILDTPGHQDFSEDTYRTLMAVDSAVMVIDSAKGIEPQTKKLFKVVKQRGIPIFTFMNKLDRDGRPPLDLIAELEDLLGIEGVAMNWPIGSGQTLKGLYDIANNRVELYRKDGEDRFLPLNDDGTLPDSEALSQDPQFKDTLDEIELIKEAGNKFNREKIAMGDQTPVFFGSALTNFGVETFLNSFVDLAPAPESHTVNEDEELSPEDPEFSGFVFKIQANMNPNHRDRIAFVRIGSGEFKKGLDVTLARTGKPIRLNNATEFMSSERVQVSDAVAGDIVGLYDTGNFQIGDSIYSGKRKIVYPALPEFTPELFMRVTAKNVMKQKSFHKGMNQLVQEGAIQLYRNYQTDEYILGAVGQLQFEVFQFRMKNEYNSEVEMNSIGHRVARWIDPEQLDPQMSNSRNLLVKDRYGNPLFLFENEFAERFFRDKYPDIKLTEKL</sequence>
<evidence type="ECO:0000255" key="1">
    <source>
        <dbReference type="HAMAP-Rule" id="MF_00072"/>
    </source>
</evidence>
<accession>Q5FLA9</accession>
<name>RF3_LACAC</name>
<reference key="1">
    <citation type="journal article" date="2005" name="Proc. Natl. Acad. Sci. U.S.A.">
        <title>Complete genome sequence of the probiotic lactic acid bacterium Lactobacillus acidophilus NCFM.</title>
        <authorList>
            <person name="Altermann E."/>
            <person name="Russell W.M."/>
            <person name="Azcarate-Peril M.A."/>
            <person name="Barrangou R."/>
            <person name="Buck B.L."/>
            <person name="McAuliffe O."/>
            <person name="Souther N."/>
            <person name="Dobson A."/>
            <person name="Duong T."/>
            <person name="Callanan M."/>
            <person name="Lick S."/>
            <person name="Hamrick A."/>
            <person name="Cano R."/>
            <person name="Klaenhammer T.R."/>
        </authorList>
    </citation>
    <scope>NUCLEOTIDE SEQUENCE [LARGE SCALE GENOMIC DNA]</scope>
    <source>
        <strain>ATCC 700396 / NCK56 / N2 / NCFM</strain>
    </source>
</reference>
<gene>
    <name evidence="1" type="primary">prfC</name>
    <name type="ordered locus">LBA0636</name>
</gene>
<feature type="chain" id="PRO_0000242184" description="Peptide chain release factor 3">
    <location>
        <begin position="1"/>
        <end position="523"/>
    </location>
</feature>
<feature type="domain" description="tr-type G">
    <location>
        <begin position="10"/>
        <end position="277"/>
    </location>
</feature>
<feature type="binding site" evidence="1">
    <location>
        <begin position="19"/>
        <end position="26"/>
    </location>
    <ligand>
        <name>GTP</name>
        <dbReference type="ChEBI" id="CHEBI:37565"/>
    </ligand>
</feature>
<feature type="binding site" evidence="1">
    <location>
        <begin position="87"/>
        <end position="91"/>
    </location>
    <ligand>
        <name>GTP</name>
        <dbReference type="ChEBI" id="CHEBI:37565"/>
    </ligand>
</feature>
<feature type="binding site" evidence="1">
    <location>
        <begin position="141"/>
        <end position="144"/>
    </location>
    <ligand>
        <name>GTP</name>
        <dbReference type="ChEBI" id="CHEBI:37565"/>
    </ligand>
</feature>
<keyword id="KW-0963">Cytoplasm</keyword>
<keyword id="KW-0342">GTP-binding</keyword>
<keyword id="KW-0547">Nucleotide-binding</keyword>
<keyword id="KW-0648">Protein biosynthesis</keyword>
<keyword id="KW-1185">Reference proteome</keyword>
<proteinExistence type="inferred from homology"/>
<dbReference type="EMBL" id="CP000033">
    <property type="protein sequence ID" value="AAV42515.1"/>
    <property type="molecule type" value="Genomic_DNA"/>
</dbReference>
<dbReference type="RefSeq" id="WP_003546473.1">
    <property type="nucleotide sequence ID" value="NC_006814.3"/>
</dbReference>
<dbReference type="RefSeq" id="YP_193546.1">
    <property type="nucleotide sequence ID" value="NC_006814.3"/>
</dbReference>
<dbReference type="SMR" id="Q5FLA9"/>
<dbReference type="STRING" id="272621.LBA0636"/>
<dbReference type="KEGG" id="lac:LBA0636"/>
<dbReference type="PATRIC" id="fig|272621.13.peg.608"/>
<dbReference type="eggNOG" id="COG4108">
    <property type="taxonomic scope" value="Bacteria"/>
</dbReference>
<dbReference type="HOGENOM" id="CLU_002794_2_1_9"/>
<dbReference type="OrthoDB" id="9804431at2"/>
<dbReference type="BioCyc" id="LACI272621:G1G49-661-MONOMER"/>
<dbReference type="Proteomes" id="UP000006381">
    <property type="component" value="Chromosome"/>
</dbReference>
<dbReference type="GO" id="GO:0005829">
    <property type="term" value="C:cytosol"/>
    <property type="evidence" value="ECO:0007669"/>
    <property type="project" value="TreeGrafter"/>
</dbReference>
<dbReference type="GO" id="GO:0005525">
    <property type="term" value="F:GTP binding"/>
    <property type="evidence" value="ECO:0007669"/>
    <property type="project" value="UniProtKB-UniRule"/>
</dbReference>
<dbReference type="GO" id="GO:0003924">
    <property type="term" value="F:GTPase activity"/>
    <property type="evidence" value="ECO:0007669"/>
    <property type="project" value="InterPro"/>
</dbReference>
<dbReference type="GO" id="GO:0016150">
    <property type="term" value="F:translation release factor activity, codon nonspecific"/>
    <property type="evidence" value="ECO:0007669"/>
    <property type="project" value="TreeGrafter"/>
</dbReference>
<dbReference type="GO" id="GO:0016149">
    <property type="term" value="F:translation release factor activity, codon specific"/>
    <property type="evidence" value="ECO:0007669"/>
    <property type="project" value="UniProtKB-UniRule"/>
</dbReference>
<dbReference type="GO" id="GO:0006449">
    <property type="term" value="P:regulation of translational termination"/>
    <property type="evidence" value="ECO:0007669"/>
    <property type="project" value="UniProtKB-UniRule"/>
</dbReference>
<dbReference type="CDD" id="cd04169">
    <property type="entry name" value="RF3"/>
    <property type="match status" value="1"/>
</dbReference>
<dbReference type="CDD" id="cd16259">
    <property type="entry name" value="RF3_III"/>
    <property type="match status" value="1"/>
</dbReference>
<dbReference type="FunFam" id="3.30.70.3280:FF:000001">
    <property type="entry name" value="Peptide chain release factor 3"/>
    <property type="match status" value="1"/>
</dbReference>
<dbReference type="FunFam" id="3.40.50.300:FF:000542">
    <property type="entry name" value="Peptide chain release factor 3"/>
    <property type="match status" value="1"/>
</dbReference>
<dbReference type="Gene3D" id="3.40.50.300">
    <property type="entry name" value="P-loop containing nucleotide triphosphate hydrolases"/>
    <property type="match status" value="1"/>
</dbReference>
<dbReference type="Gene3D" id="3.30.70.3280">
    <property type="entry name" value="Peptide chain release factor 3, domain III"/>
    <property type="match status" value="1"/>
</dbReference>
<dbReference type="Gene3D" id="2.40.30.10">
    <property type="entry name" value="Translation factors"/>
    <property type="match status" value="1"/>
</dbReference>
<dbReference type="HAMAP" id="MF_00072">
    <property type="entry name" value="Rel_fac_3"/>
    <property type="match status" value="1"/>
</dbReference>
<dbReference type="InterPro" id="IPR053905">
    <property type="entry name" value="EF-G-like_DII"/>
</dbReference>
<dbReference type="InterPro" id="IPR035647">
    <property type="entry name" value="EFG_III/V"/>
</dbReference>
<dbReference type="InterPro" id="IPR031157">
    <property type="entry name" value="G_TR_CS"/>
</dbReference>
<dbReference type="InterPro" id="IPR027417">
    <property type="entry name" value="P-loop_NTPase"/>
</dbReference>
<dbReference type="InterPro" id="IPR004548">
    <property type="entry name" value="PrfC"/>
</dbReference>
<dbReference type="InterPro" id="IPR032090">
    <property type="entry name" value="RF3_C"/>
</dbReference>
<dbReference type="InterPro" id="IPR038467">
    <property type="entry name" value="RF3_dom_3_sf"/>
</dbReference>
<dbReference type="InterPro" id="IPR041732">
    <property type="entry name" value="RF3_GTP-bd"/>
</dbReference>
<dbReference type="InterPro" id="IPR005225">
    <property type="entry name" value="Small_GTP-bd"/>
</dbReference>
<dbReference type="InterPro" id="IPR000795">
    <property type="entry name" value="T_Tr_GTP-bd_dom"/>
</dbReference>
<dbReference type="InterPro" id="IPR009000">
    <property type="entry name" value="Transl_B-barrel_sf"/>
</dbReference>
<dbReference type="NCBIfam" id="TIGR00503">
    <property type="entry name" value="prfC"/>
    <property type="match status" value="1"/>
</dbReference>
<dbReference type="NCBIfam" id="NF001964">
    <property type="entry name" value="PRK00741.1"/>
    <property type="match status" value="1"/>
</dbReference>
<dbReference type="NCBIfam" id="TIGR00231">
    <property type="entry name" value="small_GTP"/>
    <property type="match status" value="1"/>
</dbReference>
<dbReference type="PANTHER" id="PTHR43556">
    <property type="entry name" value="PEPTIDE CHAIN RELEASE FACTOR RF3"/>
    <property type="match status" value="1"/>
</dbReference>
<dbReference type="PANTHER" id="PTHR43556:SF2">
    <property type="entry name" value="PEPTIDE CHAIN RELEASE FACTOR RF3"/>
    <property type="match status" value="1"/>
</dbReference>
<dbReference type="Pfam" id="PF22042">
    <property type="entry name" value="EF-G_D2"/>
    <property type="match status" value="1"/>
</dbReference>
<dbReference type="Pfam" id="PF00009">
    <property type="entry name" value="GTP_EFTU"/>
    <property type="match status" value="1"/>
</dbReference>
<dbReference type="Pfam" id="PF16658">
    <property type="entry name" value="RF3_C"/>
    <property type="match status" value="1"/>
</dbReference>
<dbReference type="PRINTS" id="PR00315">
    <property type="entry name" value="ELONGATNFCT"/>
</dbReference>
<dbReference type="SUPFAM" id="SSF54980">
    <property type="entry name" value="EF-G C-terminal domain-like"/>
    <property type="match status" value="1"/>
</dbReference>
<dbReference type="SUPFAM" id="SSF52540">
    <property type="entry name" value="P-loop containing nucleoside triphosphate hydrolases"/>
    <property type="match status" value="1"/>
</dbReference>
<dbReference type="SUPFAM" id="SSF50447">
    <property type="entry name" value="Translation proteins"/>
    <property type="match status" value="1"/>
</dbReference>
<dbReference type="PROSITE" id="PS00301">
    <property type="entry name" value="G_TR_1"/>
    <property type="match status" value="1"/>
</dbReference>
<dbReference type="PROSITE" id="PS51722">
    <property type="entry name" value="G_TR_2"/>
    <property type="match status" value="1"/>
</dbReference>
<protein>
    <recommendedName>
        <fullName evidence="1">Peptide chain release factor 3</fullName>
        <shortName evidence="1">RF-3</shortName>
    </recommendedName>
</protein>
<organism>
    <name type="scientific">Lactobacillus acidophilus (strain ATCC 700396 / NCK56 / N2 / NCFM)</name>
    <dbReference type="NCBI Taxonomy" id="272621"/>
    <lineage>
        <taxon>Bacteria</taxon>
        <taxon>Bacillati</taxon>
        <taxon>Bacillota</taxon>
        <taxon>Bacilli</taxon>
        <taxon>Lactobacillales</taxon>
        <taxon>Lactobacillaceae</taxon>
        <taxon>Lactobacillus</taxon>
    </lineage>
</organism>
<comment type="function">
    <text evidence="1">Increases the formation of ribosomal termination complexes and stimulates activities of RF-1 and RF-2. It binds guanine nucleotides and has strong preference for UGA stop codons. It may interact directly with the ribosome. The stimulation of RF-1 and RF-2 is significantly reduced by GTP and GDP, but not by GMP.</text>
</comment>
<comment type="subcellular location">
    <subcellularLocation>
        <location evidence="1">Cytoplasm</location>
    </subcellularLocation>
</comment>
<comment type="similarity">
    <text evidence="1">Belongs to the TRAFAC class translation factor GTPase superfamily. Classic translation factor GTPase family. PrfC subfamily.</text>
</comment>